<reference key="1">
    <citation type="journal article" date="2003" name="Proc. Natl. Acad. Sci. U.S.A.">
        <title>The genome of Nanoarchaeum equitans: insights into early archaeal evolution and derived parasitism.</title>
        <authorList>
            <person name="Waters E."/>
            <person name="Hohn M.J."/>
            <person name="Ahel I."/>
            <person name="Graham D.E."/>
            <person name="Adams M.D."/>
            <person name="Barnstead M."/>
            <person name="Beeson K.Y."/>
            <person name="Bibbs L."/>
            <person name="Bolanos R."/>
            <person name="Keller M."/>
            <person name="Kretz K."/>
            <person name="Lin X."/>
            <person name="Mathur E."/>
            <person name="Ni J."/>
            <person name="Podar M."/>
            <person name="Richardson T."/>
            <person name="Sutton G.G."/>
            <person name="Simon M."/>
            <person name="Soell D."/>
            <person name="Stetter K.O."/>
            <person name="Short J.M."/>
            <person name="Noorderwier M."/>
        </authorList>
    </citation>
    <scope>NUCLEOTIDE SEQUENCE [LARGE SCALE GENOMIC DNA]</scope>
    <source>
        <strain>Kin4-M</strain>
    </source>
</reference>
<feature type="chain" id="PRO_0000293214" description="Small ribosomal subunit protein uS5">
    <location>
        <begin position="1"/>
        <end position="231"/>
    </location>
</feature>
<feature type="domain" description="S5 DRBM" evidence="1">
    <location>
        <begin position="61"/>
        <end position="124"/>
    </location>
</feature>
<evidence type="ECO:0000255" key="1">
    <source>
        <dbReference type="HAMAP-Rule" id="MF_01307"/>
    </source>
</evidence>
<evidence type="ECO:0000305" key="2"/>
<organism>
    <name type="scientific">Nanoarchaeum equitans (strain Kin4-M)</name>
    <dbReference type="NCBI Taxonomy" id="228908"/>
    <lineage>
        <taxon>Archaea</taxon>
        <taxon>Nanobdellota</taxon>
        <taxon>Candidatus Nanoarchaeia</taxon>
        <taxon>Nanoarchaeales</taxon>
        <taxon>Nanoarchaeaceae</taxon>
        <taxon>Nanoarchaeum</taxon>
    </lineage>
</organism>
<sequence>MVNIEEWQPKTKLGRLVKEGKITNIDEILSNKYVIREPEIVDVLLPNLEVEFMKWRIIRGKFRSKKPYRMAQKKTAEGNKTRYEVIAIVGDKDGHVGVGLGRSSDLLIAREKAINRAKLNIIKVARGCGSWECACGAPHSIPYQVEGKSGSVRVILKPAPKGVGIVADDEIKKIFRLAGIKDVWVRSFGKTKTKMNHVFAVFDALKKLSNVRVQPFFIKFSGYTEGSIINK</sequence>
<name>RS5_NANEQ</name>
<gene>
    <name evidence="1" type="primary">rps5</name>
    <name type="ordered locus">NEQ388</name>
</gene>
<comment type="function">
    <text evidence="1">With S4 and S12 plays an important role in translational accuracy.</text>
</comment>
<comment type="subunit">
    <text evidence="1">Part of the 30S ribosomal subunit. Contacts protein S4.</text>
</comment>
<comment type="domain">
    <text>The N-terminal domain interacts with the head of the 30S subunit; the C-terminal domain interacts with the body and contacts protein S4. The interaction surface between S4 and S5 is involved in control of translational fidelity.</text>
</comment>
<comment type="similarity">
    <text evidence="1">Belongs to the universal ribosomal protein uS5 family.</text>
</comment>
<keyword id="KW-1185">Reference proteome</keyword>
<keyword id="KW-0687">Ribonucleoprotein</keyword>
<keyword id="KW-0689">Ribosomal protein</keyword>
<keyword id="KW-0694">RNA-binding</keyword>
<keyword id="KW-0699">rRNA-binding</keyword>
<accession>Q74MD4</accession>
<protein>
    <recommendedName>
        <fullName evidence="1">Small ribosomal subunit protein uS5</fullName>
    </recommendedName>
    <alternativeName>
        <fullName evidence="2">30S ribosomal protein S5</fullName>
    </alternativeName>
</protein>
<proteinExistence type="inferred from homology"/>
<dbReference type="EMBL" id="AE017199">
    <property type="protein sequence ID" value="AAR39236.1"/>
    <property type="molecule type" value="Genomic_DNA"/>
</dbReference>
<dbReference type="SMR" id="Q74MD4"/>
<dbReference type="STRING" id="228908.NEQ388"/>
<dbReference type="EnsemblBacteria" id="AAR39236">
    <property type="protein sequence ID" value="AAR39236"/>
    <property type="gene ID" value="NEQ388"/>
</dbReference>
<dbReference type="KEGG" id="neq:NEQ388"/>
<dbReference type="PATRIC" id="fig|228908.8.peg.398"/>
<dbReference type="HOGENOM" id="CLU_065898_0_1_2"/>
<dbReference type="Proteomes" id="UP000000578">
    <property type="component" value="Chromosome"/>
</dbReference>
<dbReference type="GO" id="GO:0015935">
    <property type="term" value="C:small ribosomal subunit"/>
    <property type="evidence" value="ECO:0007669"/>
    <property type="project" value="InterPro"/>
</dbReference>
<dbReference type="GO" id="GO:0019843">
    <property type="term" value="F:rRNA binding"/>
    <property type="evidence" value="ECO:0007669"/>
    <property type="project" value="UniProtKB-UniRule"/>
</dbReference>
<dbReference type="GO" id="GO:0003735">
    <property type="term" value="F:structural constituent of ribosome"/>
    <property type="evidence" value="ECO:0007669"/>
    <property type="project" value="InterPro"/>
</dbReference>
<dbReference type="GO" id="GO:0006412">
    <property type="term" value="P:translation"/>
    <property type="evidence" value="ECO:0007669"/>
    <property type="project" value="UniProtKB-UniRule"/>
</dbReference>
<dbReference type="FunFam" id="3.30.230.10:FF:000004">
    <property type="entry name" value="40S ribosomal protein S2"/>
    <property type="match status" value="1"/>
</dbReference>
<dbReference type="Gene3D" id="3.30.160.20">
    <property type="match status" value="1"/>
</dbReference>
<dbReference type="Gene3D" id="3.30.230.10">
    <property type="match status" value="1"/>
</dbReference>
<dbReference type="HAMAP" id="MF_01307_A">
    <property type="entry name" value="Ribosomal_uS5_A"/>
    <property type="match status" value="1"/>
</dbReference>
<dbReference type="InterPro" id="IPR020568">
    <property type="entry name" value="Ribosomal_Su5_D2-typ_SF"/>
</dbReference>
<dbReference type="InterPro" id="IPR000851">
    <property type="entry name" value="Ribosomal_uS5"/>
</dbReference>
<dbReference type="InterPro" id="IPR047866">
    <property type="entry name" value="Ribosomal_uS5_arc"/>
</dbReference>
<dbReference type="InterPro" id="IPR005324">
    <property type="entry name" value="Ribosomal_uS5_C"/>
</dbReference>
<dbReference type="InterPro" id="IPR005711">
    <property type="entry name" value="Ribosomal_uS5_euk/arc"/>
</dbReference>
<dbReference type="InterPro" id="IPR013810">
    <property type="entry name" value="Ribosomal_uS5_N"/>
</dbReference>
<dbReference type="InterPro" id="IPR014721">
    <property type="entry name" value="Ribsml_uS5_D2-typ_fold_subgr"/>
</dbReference>
<dbReference type="NCBIfam" id="NF003125">
    <property type="entry name" value="PRK04044.1"/>
    <property type="match status" value="1"/>
</dbReference>
<dbReference type="NCBIfam" id="TIGR01020">
    <property type="entry name" value="uS5_euk_arch"/>
    <property type="match status" value="1"/>
</dbReference>
<dbReference type="PANTHER" id="PTHR48277">
    <property type="entry name" value="MITOCHONDRIAL RIBOSOMAL PROTEIN S5"/>
    <property type="match status" value="1"/>
</dbReference>
<dbReference type="PANTHER" id="PTHR48277:SF1">
    <property type="entry name" value="MITOCHONDRIAL RIBOSOMAL PROTEIN S5"/>
    <property type="match status" value="1"/>
</dbReference>
<dbReference type="Pfam" id="PF00333">
    <property type="entry name" value="Ribosomal_S5"/>
    <property type="match status" value="1"/>
</dbReference>
<dbReference type="Pfam" id="PF03719">
    <property type="entry name" value="Ribosomal_S5_C"/>
    <property type="match status" value="1"/>
</dbReference>
<dbReference type="SUPFAM" id="SSF54768">
    <property type="entry name" value="dsRNA-binding domain-like"/>
    <property type="match status" value="1"/>
</dbReference>
<dbReference type="SUPFAM" id="SSF54211">
    <property type="entry name" value="Ribosomal protein S5 domain 2-like"/>
    <property type="match status" value="1"/>
</dbReference>
<dbReference type="PROSITE" id="PS50881">
    <property type="entry name" value="S5_DSRBD"/>
    <property type="match status" value="1"/>
</dbReference>